<protein>
    <recommendedName>
        <fullName>Uncharacterized protein YpbS</fullName>
    </recommendedName>
</protein>
<accession>P54160</accession>
<organism>
    <name type="scientific">Bacillus subtilis (strain 168)</name>
    <dbReference type="NCBI Taxonomy" id="224308"/>
    <lineage>
        <taxon>Bacteria</taxon>
        <taxon>Bacillati</taxon>
        <taxon>Bacillota</taxon>
        <taxon>Bacilli</taxon>
        <taxon>Bacillales</taxon>
        <taxon>Bacillaceae</taxon>
        <taxon>Bacillus</taxon>
    </lineage>
</organism>
<dbReference type="EMBL" id="L77246">
    <property type="protein sequence ID" value="AAA96616.1"/>
    <property type="molecule type" value="Genomic_DNA"/>
</dbReference>
<dbReference type="EMBL" id="AL009126">
    <property type="protein sequence ID" value="CAB14119.1"/>
    <property type="molecule type" value="Genomic_DNA"/>
</dbReference>
<dbReference type="PIR" id="F69933">
    <property type="entry name" value="F69933"/>
</dbReference>
<dbReference type="RefSeq" id="NP_390084.1">
    <property type="nucleotide sequence ID" value="NC_000964.3"/>
</dbReference>
<dbReference type="RefSeq" id="WP_003230757.1">
    <property type="nucleotide sequence ID" value="NZ_OZ025638.1"/>
</dbReference>
<dbReference type="SMR" id="P54160"/>
<dbReference type="FunCoup" id="P54160">
    <property type="interactions" value="14"/>
</dbReference>
<dbReference type="STRING" id="224308.BSU22020"/>
<dbReference type="PaxDb" id="224308-BSU22020"/>
<dbReference type="EnsemblBacteria" id="CAB14119">
    <property type="protein sequence ID" value="CAB14119"/>
    <property type="gene ID" value="BSU_22020"/>
</dbReference>
<dbReference type="GeneID" id="939067"/>
<dbReference type="KEGG" id="bsu:BSU22020"/>
<dbReference type="PATRIC" id="fig|224308.179.peg.2406"/>
<dbReference type="eggNOG" id="ENOG5032WBV">
    <property type="taxonomic scope" value="Bacteria"/>
</dbReference>
<dbReference type="InParanoid" id="P54160"/>
<dbReference type="OrthoDB" id="2679622at2"/>
<dbReference type="BioCyc" id="BSUB:BSU22020-MONOMER"/>
<dbReference type="Proteomes" id="UP000001570">
    <property type="component" value="Chromosome"/>
</dbReference>
<dbReference type="InterPro" id="IPR019688">
    <property type="entry name" value="DUF2533"/>
</dbReference>
<dbReference type="Pfam" id="PF10752">
    <property type="entry name" value="DUF2533"/>
    <property type="match status" value="1"/>
</dbReference>
<name>YPBS_BACSU</name>
<proteinExistence type="predicted"/>
<reference key="1">
    <citation type="journal article" date="1996" name="Microbiology">
        <title>Organization of the Bacillus subtilis 168 chromosome between kdg and the attachment site of the SP beta prophage: use of long accurate PCR and yeast artificial chromosomes for sequencing.</title>
        <authorList>
            <person name="Capuano V."/>
            <person name="Galleron N."/>
            <person name="Pujic P."/>
            <person name="Sorokin A."/>
            <person name="Ehrlich S.D."/>
        </authorList>
    </citation>
    <scope>NUCLEOTIDE SEQUENCE [GENOMIC DNA]</scope>
    <source>
        <strain>168 / Marburg / ATCC 6051 / DSM 10 / JCM 1465 / NBRC 13719 / NCIMB 3610 / NRRL NRS-744 / VKM B-501</strain>
    </source>
</reference>
<reference key="2">
    <citation type="journal article" date="1997" name="Nature">
        <title>The complete genome sequence of the Gram-positive bacterium Bacillus subtilis.</title>
        <authorList>
            <person name="Kunst F."/>
            <person name="Ogasawara N."/>
            <person name="Moszer I."/>
            <person name="Albertini A.M."/>
            <person name="Alloni G."/>
            <person name="Azevedo V."/>
            <person name="Bertero M.G."/>
            <person name="Bessieres P."/>
            <person name="Bolotin A."/>
            <person name="Borchert S."/>
            <person name="Borriss R."/>
            <person name="Boursier L."/>
            <person name="Brans A."/>
            <person name="Braun M."/>
            <person name="Brignell S.C."/>
            <person name="Bron S."/>
            <person name="Brouillet S."/>
            <person name="Bruschi C.V."/>
            <person name="Caldwell B."/>
            <person name="Capuano V."/>
            <person name="Carter N.M."/>
            <person name="Choi S.-K."/>
            <person name="Codani J.-J."/>
            <person name="Connerton I.F."/>
            <person name="Cummings N.J."/>
            <person name="Daniel R.A."/>
            <person name="Denizot F."/>
            <person name="Devine K.M."/>
            <person name="Duesterhoeft A."/>
            <person name="Ehrlich S.D."/>
            <person name="Emmerson P.T."/>
            <person name="Entian K.-D."/>
            <person name="Errington J."/>
            <person name="Fabret C."/>
            <person name="Ferrari E."/>
            <person name="Foulger D."/>
            <person name="Fritz C."/>
            <person name="Fujita M."/>
            <person name="Fujita Y."/>
            <person name="Fuma S."/>
            <person name="Galizzi A."/>
            <person name="Galleron N."/>
            <person name="Ghim S.-Y."/>
            <person name="Glaser P."/>
            <person name="Goffeau A."/>
            <person name="Golightly E.J."/>
            <person name="Grandi G."/>
            <person name="Guiseppi G."/>
            <person name="Guy B.J."/>
            <person name="Haga K."/>
            <person name="Haiech J."/>
            <person name="Harwood C.R."/>
            <person name="Henaut A."/>
            <person name="Hilbert H."/>
            <person name="Holsappel S."/>
            <person name="Hosono S."/>
            <person name="Hullo M.-F."/>
            <person name="Itaya M."/>
            <person name="Jones L.-M."/>
            <person name="Joris B."/>
            <person name="Karamata D."/>
            <person name="Kasahara Y."/>
            <person name="Klaerr-Blanchard M."/>
            <person name="Klein C."/>
            <person name="Kobayashi Y."/>
            <person name="Koetter P."/>
            <person name="Koningstein G."/>
            <person name="Krogh S."/>
            <person name="Kumano M."/>
            <person name="Kurita K."/>
            <person name="Lapidus A."/>
            <person name="Lardinois S."/>
            <person name="Lauber J."/>
            <person name="Lazarevic V."/>
            <person name="Lee S.-M."/>
            <person name="Levine A."/>
            <person name="Liu H."/>
            <person name="Masuda S."/>
            <person name="Mauel C."/>
            <person name="Medigue C."/>
            <person name="Medina N."/>
            <person name="Mellado R.P."/>
            <person name="Mizuno M."/>
            <person name="Moestl D."/>
            <person name="Nakai S."/>
            <person name="Noback M."/>
            <person name="Noone D."/>
            <person name="O'Reilly M."/>
            <person name="Ogawa K."/>
            <person name="Ogiwara A."/>
            <person name="Oudega B."/>
            <person name="Park S.-H."/>
            <person name="Parro V."/>
            <person name="Pohl T.M."/>
            <person name="Portetelle D."/>
            <person name="Porwollik S."/>
            <person name="Prescott A.M."/>
            <person name="Presecan E."/>
            <person name="Pujic P."/>
            <person name="Purnelle B."/>
            <person name="Rapoport G."/>
            <person name="Rey M."/>
            <person name="Reynolds S."/>
            <person name="Rieger M."/>
            <person name="Rivolta C."/>
            <person name="Rocha E."/>
            <person name="Roche B."/>
            <person name="Rose M."/>
            <person name="Sadaie Y."/>
            <person name="Sato T."/>
            <person name="Scanlan E."/>
            <person name="Schleich S."/>
            <person name="Schroeter R."/>
            <person name="Scoffone F."/>
            <person name="Sekiguchi J."/>
            <person name="Sekowska A."/>
            <person name="Seror S.J."/>
            <person name="Serror P."/>
            <person name="Shin B.-S."/>
            <person name="Soldo B."/>
            <person name="Sorokin A."/>
            <person name="Tacconi E."/>
            <person name="Takagi T."/>
            <person name="Takahashi H."/>
            <person name="Takemaru K."/>
            <person name="Takeuchi M."/>
            <person name="Tamakoshi A."/>
            <person name="Tanaka T."/>
            <person name="Terpstra P."/>
            <person name="Tognoni A."/>
            <person name="Tosato V."/>
            <person name="Uchiyama S."/>
            <person name="Vandenbol M."/>
            <person name="Vannier F."/>
            <person name="Vassarotti A."/>
            <person name="Viari A."/>
            <person name="Wambutt R."/>
            <person name="Wedler E."/>
            <person name="Wedler H."/>
            <person name="Weitzenegger T."/>
            <person name="Winters P."/>
            <person name="Wipat A."/>
            <person name="Yamamoto H."/>
            <person name="Yamane K."/>
            <person name="Yasumoto K."/>
            <person name="Yata K."/>
            <person name="Yoshida K."/>
            <person name="Yoshikawa H.-F."/>
            <person name="Zumstein E."/>
            <person name="Yoshikawa H."/>
            <person name="Danchin A."/>
        </authorList>
    </citation>
    <scope>NUCLEOTIDE SEQUENCE [LARGE SCALE GENOMIC DNA]</scope>
    <source>
        <strain>168</strain>
    </source>
</reference>
<gene>
    <name type="primary">ypbS</name>
    <name type="ordered locus">BSU22020</name>
</gene>
<feature type="chain" id="PRO_0000049683" description="Uncharacterized protein YpbS">
    <location>
        <begin position="1"/>
        <end position="85"/>
    </location>
</feature>
<sequence length="85" mass="9885">MSEVHKAISAHSSKQHEHIKAFMRLENMRELAIEEAVAKCRNDEPYTTDAINEITEQMNQLAKKGIVPTRRLVSKEMVREYVSRM</sequence>
<keyword id="KW-1185">Reference proteome</keyword>